<name>MTFA_SHIBS</name>
<accession>Q322W7</accession>
<protein>
    <recommendedName>
        <fullName evidence="1">Mlc titration factor A</fullName>
    </recommendedName>
    <alternativeName>
        <fullName evidence="1">Probable zinc metallopeptidase MtfA</fullName>
        <ecNumber evidence="1">3.4.11.-</ecNumber>
    </alternativeName>
</protein>
<proteinExistence type="inferred from homology"/>
<feature type="chain" id="PRO_0000316323" description="Mlc titration factor A">
    <location>
        <begin position="1"/>
        <end position="265"/>
    </location>
</feature>
<feature type="binding site" evidence="1">
    <location>
        <position position="111"/>
    </location>
    <ligand>
        <name>Zn(2+)</name>
        <dbReference type="ChEBI" id="CHEBI:29105"/>
    </ligand>
</feature>
<feature type="binding site" evidence="1">
    <location>
        <position position="148"/>
    </location>
    <ligand>
        <name>Zn(2+)</name>
        <dbReference type="ChEBI" id="CHEBI:29105"/>
    </ligand>
</feature>
<feature type="binding site" evidence="1">
    <location>
        <position position="152"/>
    </location>
    <ligand>
        <name>Zn(2+)</name>
        <dbReference type="ChEBI" id="CHEBI:29105"/>
    </ligand>
</feature>
<feature type="binding site" evidence="1">
    <location>
        <position position="211"/>
    </location>
    <ligand>
        <name>Zn(2+)</name>
        <dbReference type="ChEBI" id="CHEBI:29105"/>
    </ligand>
</feature>
<organism>
    <name type="scientific">Shigella boydii serotype 4 (strain Sb227)</name>
    <dbReference type="NCBI Taxonomy" id="300268"/>
    <lineage>
        <taxon>Bacteria</taxon>
        <taxon>Pseudomonadati</taxon>
        <taxon>Pseudomonadota</taxon>
        <taxon>Gammaproteobacteria</taxon>
        <taxon>Enterobacterales</taxon>
        <taxon>Enterobacteriaceae</taxon>
        <taxon>Shigella</taxon>
    </lineage>
</organism>
<comment type="function">
    <text evidence="1">Involved in the modulation of the activity of the glucose-phosphotransferase system (glucose-PTS). Interacts with the transcriptional repressor Mlc, preventing its interaction with DNA and leading to the modulation of expression of genes regulated by Mlc, including ptsG, which encodes the PTS system glucose-specific EIICB component.</text>
</comment>
<comment type="function">
    <text evidence="1">Shows zinc-dependent metallopeptidase activity.</text>
</comment>
<comment type="cofactor">
    <cofactor evidence="1">
        <name>Zn(2+)</name>
        <dbReference type="ChEBI" id="CHEBI:29105"/>
    </cofactor>
    <text evidence="1">Binds 1 zinc ion per subunit.</text>
</comment>
<comment type="subunit">
    <text evidence="1">Interacts with Mlc.</text>
</comment>
<comment type="subcellular location">
    <subcellularLocation>
        <location evidence="1">Cytoplasm</location>
    </subcellularLocation>
</comment>
<comment type="similarity">
    <text evidence="1">Belongs to the MtfA family.</text>
</comment>
<comment type="sequence caution" evidence="2">
    <conflict type="erroneous initiation">
        <sequence resource="EMBL-CDS" id="ABB65641"/>
    </conflict>
</comment>
<dbReference type="EC" id="3.4.11.-" evidence="1"/>
<dbReference type="EMBL" id="CP000036">
    <property type="protein sequence ID" value="ABB65641.1"/>
    <property type="status" value="ALT_INIT"/>
    <property type="molecule type" value="Genomic_DNA"/>
</dbReference>
<dbReference type="RefSeq" id="WP_001302302.1">
    <property type="nucleotide sequence ID" value="NC_007613.1"/>
</dbReference>
<dbReference type="SMR" id="Q322W7"/>
<dbReference type="MEROPS" id="M90.001"/>
<dbReference type="GeneID" id="75205786"/>
<dbReference type="KEGG" id="sbo:SBO_0979"/>
<dbReference type="HOGENOM" id="CLU_063037_0_1_6"/>
<dbReference type="Proteomes" id="UP000007067">
    <property type="component" value="Chromosome"/>
</dbReference>
<dbReference type="GO" id="GO:0005829">
    <property type="term" value="C:cytosol"/>
    <property type="evidence" value="ECO:0007669"/>
    <property type="project" value="TreeGrafter"/>
</dbReference>
<dbReference type="GO" id="GO:0004177">
    <property type="term" value="F:aminopeptidase activity"/>
    <property type="evidence" value="ECO:0007669"/>
    <property type="project" value="UniProtKB-UniRule"/>
</dbReference>
<dbReference type="GO" id="GO:0008237">
    <property type="term" value="F:metallopeptidase activity"/>
    <property type="evidence" value="ECO:0007669"/>
    <property type="project" value="UniProtKB-UniRule"/>
</dbReference>
<dbReference type="GO" id="GO:0008270">
    <property type="term" value="F:zinc ion binding"/>
    <property type="evidence" value="ECO:0007669"/>
    <property type="project" value="UniProtKB-UniRule"/>
</dbReference>
<dbReference type="GO" id="GO:0006508">
    <property type="term" value="P:proteolysis"/>
    <property type="evidence" value="ECO:0007669"/>
    <property type="project" value="UniProtKB-KW"/>
</dbReference>
<dbReference type="CDD" id="cd20169">
    <property type="entry name" value="Peptidase_M90_mtfA"/>
    <property type="match status" value="1"/>
</dbReference>
<dbReference type="FunFam" id="1.10.472.150:FF:000001">
    <property type="entry name" value="Protein MtfA"/>
    <property type="match status" value="1"/>
</dbReference>
<dbReference type="FunFam" id="3.40.390.10:FF:000012">
    <property type="entry name" value="Protein MtfA"/>
    <property type="match status" value="1"/>
</dbReference>
<dbReference type="Gene3D" id="3.40.390.10">
    <property type="entry name" value="Collagenase (Catalytic Domain)"/>
    <property type="match status" value="1"/>
</dbReference>
<dbReference type="Gene3D" id="1.10.472.150">
    <property type="entry name" value="Glucose-regulated metallo-peptidase M90, N-terminal domain"/>
    <property type="match status" value="1"/>
</dbReference>
<dbReference type="HAMAP" id="MF_01593">
    <property type="entry name" value="MtfA"/>
    <property type="match status" value="1"/>
</dbReference>
<dbReference type="InterPro" id="IPR024079">
    <property type="entry name" value="MetalloPept_cat_dom_sf"/>
</dbReference>
<dbReference type="InterPro" id="IPR057256">
    <property type="entry name" value="MtfA_enterob"/>
</dbReference>
<dbReference type="InterPro" id="IPR010384">
    <property type="entry name" value="MtfA_fam"/>
</dbReference>
<dbReference type="InterPro" id="IPR042252">
    <property type="entry name" value="MtfA_N"/>
</dbReference>
<dbReference type="NCBIfam" id="NF011939">
    <property type="entry name" value="PRK15410.1"/>
    <property type="match status" value="1"/>
</dbReference>
<dbReference type="PANTHER" id="PTHR30164">
    <property type="entry name" value="MTFA PEPTIDASE"/>
    <property type="match status" value="1"/>
</dbReference>
<dbReference type="PANTHER" id="PTHR30164:SF2">
    <property type="entry name" value="PROTEIN MTFA"/>
    <property type="match status" value="1"/>
</dbReference>
<dbReference type="Pfam" id="PF06167">
    <property type="entry name" value="Peptidase_M90"/>
    <property type="match status" value="1"/>
</dbReference>
<dbReference type="SUPFAM" id="SSF55486">
    <property type="entry name" value="Metalloproteases ('zincins'), catalytic domain"/>
    <property type="match status" value="1"/>
</dbReference>
<gene>
    <name evidence="1" type="primary">mtfA</name>
    <name type="ordered locus">SBO_0979</name>
</gene>
<sequence length="265" mass="30279">MIKWPWKVQESAHQTALPWQEALSIPLLTCLTEQEQSKLVTLAERFLQQKRLVPLQGFELDSLRSCRIALLFCLPVLELGLEWLDGFHEVLIYPAPFVVDDEWEDDIGLVHNQRIVQSGQSWQQGPIVLNWLDIQDSFDASGFNLIIHEVAHKLDTRNGDRASGVPFIPLREVAGWEHDLHAAMNNIQEEIELVGENAASIDAYAASDPAECFAVLSEYFFSAPELFAPRFPSLWQRFCQFYQQDPLQRLHHANDTDSFSATNVH</sequence>
<reference key="1">
    <citation type="journal article" date="2005" name="Nucleic Acids Res.">
        <title>Genome dynamics and diversity of Shigella species, the etiologic agents of bacillary dysentery.</title>
        <authorList>
            <person name="Yang F."/>
            <person name="Yang J."/>
            <person name="Zhang X."/>
            <person name="Chen L."/>
            <person name="Jiang Y."/>
            <person name="Yan Y."/>
            <person name="Tang X."/>
            <person name="Wang J."/>
            <person name="Xiong Z."/>
            <person name="Dong J."/>
            <person name="Xue Y."/>
            <person name="Zhu Y."/>
            <person name="Xu X."/>
            <person name="Sun L."/>
            <person name="Chen S."/>
            <person name="Nie H."/>
            <person name="Peng J."/>
            <person name="Xu J."/>
            <person name="Wang Y."/>
            <person name="Yuan Z."/>
            <person name="Wen Y."/>
            <person name="Yao Z."/>
            <person name="Shen Y."/>
            <person name="Qiang B."/>
            <person name="Hou Y."/>
            <person name="Yu J."/>
            <person name="Jin Q."/>
        </authorList>
    </citation>
    <scope>NUCLEOTIDE SEQUENCE [LARGE SCALE GENOMIC DNA]</scope>
    <source>
        <strain>Sb227</strain>
    </source>
</reference>
<keyword id="KW-0031">Aminopeptidase</keyword>
<keyword id="KW-0963">Cytoplasm</keyword>
<keyword id="KW-0378">Hydrolase</keyword>
<keyword id="KW-0479">Metal-binding</keyword>
<keyword id="KW-0482">Metalloprotease</keyword>
<keyword id="KW-0645">Protease</keyword>
<keyword id="KW-0862">Zinc</keyword>
<evidence type="ECO:0000255" key="1">
    <source>
        <dbReference type="HAMAP-Rule" id="MF_01593"/>
    </source>
</evidence>
<evidence type="ECO:0000305" key="2"/>